<proteinExistence type="evidence at transcript level"/>
<gene>
    <name evidence="1" type="primary">rpl20</name>
</gene>
<geneLocation type="chloroplast"/>
<sequence>MTRVKRGSVARKYRKNILDFVSGFRGAHSKLFRTANQRRGRSLAYAYVDKNNSKRAFRRLWIARINAAARRDGITYSSVIHSLYKNRIALNRKTLAQIATLDAYCFSMIIEKVSKIKI</sequence>
<keyword id="KW-0150">Chloroplast</keyword>
<keyword id="KW-0934">Plastid</keyword>
<keyword id="KW-0687">Ribonucleoprotein</keyword>
<keyword id="KW-0689">Ribosomal protein</keyword>
<keyword id="KW-0691">RNA editing</keyword>
<keyword id="KW-0694">RNA-binding</keyword>
<keyword id="KW-0699">rRNA-binding</keyword>
<name>RK20_ADICA</name>
<accession>Q85FJ9</accession>
<feature type="chain" id="PRO_0000177275" description="Large ribosomal subunit protein bL20c">
    <location>
        <begin position="1"/>
        <end position="118"/>
    </location>
</feature>
<organism>
    <name type="scientific">Adiantum capillus-veneris</name>
    <name type="common">Maidenhair fern</name>
    <dbReference type="NCBI Taxonomy" id="13818"/>
    <lineage>
        <taxon>Eukaryota</taxon>
        <taxon>Viridiplantae</taxon>
        <taxon>Streptophyta</taxon>
        <taxon>Embryophyta</taxon>
        <taxon>Tracheophyta</taxon>
        <taxon>Polypodiopsida</taxon>
        <taxon>Polypodiidae</taxon>
        <taxon>Polypodiales</taxon>
        <taxon>Pteridineae</taxon>
        <taxon>Pteridaceae</taxon>
        <taxon>Vittarioideae</taxon>
        <taxon>Adiantum</taxon>
    </lineage>
</organism>
<comment type="function">
    <text evidence="1">Binds directly to 23S ribosomal RNA and is necessary for the in vitro assembly process of the 50S ribosomal subunit. It is not involved in the protein synthesizing functions of that subunit.</text>
</comment>
<comment type="subcellular location">
    <subcellularLocation>
        <location>Plastid</location>
        <location>Chloroplast</location>
    </subcellularLocation>
</comment>
<comment type="RNA editing">
    <location>
        <position position="1" evidence="2"/>
    </location>
    <location>
        <position position="76" evidence="2"/>
    </location>
    <location>
        <position position="101" evidence="2"/>
    </location>
    <text>The initiator methionine is created by RNA editing.</text>
</comment>
<comment type="similarity">
    <text evidence="1">Belongs to the bacterial ribosomal protein bL20 family.</text>
</comment>
<dbReference type="EMBL" id="AY178864">
    <property type="protein sequence ID" value="AAP29414.2"/>
    <property type="molecule type" value="Genomic_DNA"/>
</dbReference>
<dbReference type="RefSeq" id="NP_848083.2">
    <property type="nucleotide sequence ID" value="NC_004766.1"/>
</dbReference>
<dbReference type="SMR" id="Q85FJ9"/>
<dbReference type="GeneID" id="807427"/>
<dbReference type="GO" id="GO:0009507">
    <property type="term" value="C:chloroplast"/>
    <property type="evidence" value="ECO:0007669"/>
    <property type="project" value="UniProtKB-SubCell"/>
</dbReference>
<dbReference type="GO" id="GO:1990904">
    <property type="term" value="C:ribonucleoprotein complex"/>
    <property type="evidence" value="ECO:0007669"/>
    <property type="project" value="UniProtKB-KW"/>
</dbReference>
<dbReference type="GO" id="GO:0005840">
    <property type="term" value="C:ribosome"/>
    <property type="evidence" value="ECO:0007669"/>
    <property type="project" value="UniProtKB-KW"/>
</dbReference>
<dbReference type="GO" id="GO:0019843">
    <property type="term" value="F:rRNA binding"/>
    <property type="evidence" value="ECO:0007669"/>
    <property type="project" value="UniProtKB-UniRule"/>
</dbReference>
<dbReference type="GO" id="GO:0003735">
    <property type="term" value="F:structural constituent of ribosome"/>
    <property type="evidence" value="ECO:0007669"/>
    <property type="project" value="InterPro"/>
</dbReference>
<dbReference type="GO" id="GO:0000027">
    <property type="term" value="P:ribosomal large subunit assembly"/>
    <property type="evidence" value="ECO:0007669"/>
    <property type="project" value="UniProtKB-UniRule"/>
</dbReference>
<dbReference type="GO" id="GO:0006412">
    <property type="term" value="P:translation"/>
    <property type="evidence" value="ECO:0007669"/>
    <property type="project" value="InterPro"/>
</dbReference>
<dbReference type="CDD" id="cd07026">
    <property type="entry name" value="Ribosomal_L20"/>
    <property type="match status" value="1"/>
</dbReference>
<dbReference type="FunFam" id="1.10.1900.20:FF:000001">
    <property type="entry name" value="50S ribosomal protein L20"/>
    <property type="match status" value="1"/>
</dbReference>
<dbReference type="Gene3D" id="6.10.160.10">
    <property type="match status" value="1"/>
</dbReference>
<dbReference type="Gene3D" id="1.10.1900.20">
    <property type="entry name" value="Ribosomal protein L20"/>
    <property type="match status" value="1"/>
</dbReference>
<dbReference type="HAMAP" id="MF_00382">
    <property type="entry name" value="Ribosomal_bL20"/>
    <property type="match status" value="1"/>
</dbReference>
<dbReference type="InterPro" id="IPR005813">
    <property type="entry name" value="Ribosomal_bL20"/>
</dbReference>
<dbReference type="InterPro" id="IPR049946">
    <property type="entry name" value="RIBOSOMAL_L20_CS"/>
</dbReference>
<dbReference type="InterPro" id="IPR035566">
    <property type="entry name" value="Ribosomal_protein_bL20_C"/>
</dbReference>
<dbReference type="NCBIfam" id="TIGR01032">
    <property type="entry name" value="rplT_bact"/>
    <property type="match status" value="1"/>
</dbReference>
<dbReference type="PANTHER" id="PTHR10986">
    <property type="entry name" value="39S RIBOSOMAL PROTEIN L20"/>
    <property type="match status" value="1"/>
</dbReference>
<dbReference type="Pfam" id="PF00453">
    <property type="entry name" value="Ribosomal_L20"/>
    <property type="match status" value="1"/>
</dbReference>
<dbReference type="PRINTS" id="PR00062">
    <property type="entry name" value="RIBOSOMALL20"/>
</dbReference>
<dbReference type="SUPFAM" id="SSF74731">
    <property type="entry name" value="Ribosomal protein L20"/>
    <property type="match status" value="1"/>
</dbReference>
<dbReference type="PROSITE" id="PS00937">
    <property type="entry name" value="RIBOSOMAL_L20"/>
    <property type="match status" value="1"/>
</dbReference>
<reference key="1">
    <citation type="journal article" date="2003" name="DNA Res.">
        <title>Complete nucleotide sequence of the chloroplast genome from a leptosporangiate fern, Adiantum capillus-veneris L.</title>
        <authorList>
            <person name="Wolf P.G."/>
            <person name="Rowe C.A."/>
            <person name="Sinclair R.B."/>
            <person name="Hasebe M."/>
        </authorList>
    </citation>
    <scope>NUCLEOTIDE SEQUENCE [LARGE SCALE GENOMIC DNA]</scope>
</reference>
<reference key="2">
    <citation type="journal article" date="2004" name="Gene">
        <title>High levels of RNA editing in a vascular plant chloroplast genome: analysis of transcripts from the fern Adiantum capillus-veneris.</title>
        <authorList>
            <person name="Wolf P.G."/>
            <person name="Rowe C.A."/>
            <person name="Hasebe M."/>
        </authorList>
    </citation>
    <scope>NUCLEOTIDE SEQUENCE [GENOMIC DNA]</scope>
    <scope>RNA EDITING</scope>
    <source>
        <tissue>Frond</tissue>
    </source>
</reference>
<evidence type="ECO:0000255" key="1">
    <source>
        <dbReference type="HAMAP-Rule" id="MF_00382"/>
    </source>
</evidence>
<evidence type="ECO:0000269" key="2">
    <source>
    </source>
</evidence>
<evidence type="ECO:0000305" key="3"/>
<protein>
    <recommendedName>
        <fullName evidence="1">Large ribosomal subunit protein bL20c</fullName>
    </recommendedName>
    <alternativeName>
        <fullName evidence="3">50S ribosomal protein L20, chloroplastic</fullName>
    </alternativeName>
</protein>